<sequence>MIASLRGTVISIGLGTAVIECQGVGYEVTTTPTTLARLQRGEEATLLTTMVVREDAMKLYGFIDDQSREMFALLQTVTGLGPRLALACESVLTPLEIAQAIAGGDAKTLQRVPGVGKRMADRLIVELKDKVAAYTVGVVDDGAPTAPTQGVAPVVVVDQVTQALTGLGFTEKQADDAVAAVLSADPGLDTSAALRAALAKLGGK</sequence>
<evidence type="ECO:0000255" key="1">
    <source>
        <dbReference type="HAMAP-Rule" id="MF_00031"/>
    </source>
</evidence>
<comment type="function">
    <text evidence="1">The RuvA-RuvB-RuvC complex processes Holliday junction (HJ) DNA during genetic recombination and DNA repair, while the RuvA-RuvB complex plays an important role in the rescue of blocked DNA replication forks via replication fork reversal (RFR). RuvA specifically binds to HJ cruciform DNA, conferring on it an open structure. The RuvB hexamer acts as an ATP-dependent pump, pulling dsDNA into and through the RuvAB complex. HJ branch migration allows RuvC to scan DNA until it finds its consensus sequence, where it cleaves and resolves the cruciform DNA.</text>
</comment>
<comment type="subunit">
    <text evidence="1">Homotetramer. Forms an RuvA(8)-RuvB(12)-Holliday junction (HJ) complex. HJ DNA is sandwiched between 2 RuvA tetramers; dsDNA enters through RuvA and exits via RuvB. An RuvB hexamer assembles on each DNA strand where it exits the tetramer. Each RuvB hexamer is contacted by two RuvA subunits (via domain III) on 2 adjacent RuvB subunits; this complex drives branch migration. In the full resolvosome a probable DNA-RuvA(4)-RuvB(12)-RuvC(2) complex forms which resolves the HJ.</text>
</comment>
<comment type="subcellular location">
    <subcellularLocation>
        <location evidence="1">Cytoplasm</location>
    </subcellularLocation>
</comment>
<comment type="domain">
    <text evidence="1">Has three domains with a flexible linker between the domains II and III and assumes an 'L' shape. Domain III is highly mobile and contacts RuvB.</text>
</comment>
<comment type="similarity">
    <text evidence="1">Belongs to the RuvA family.</text>
</comment>
<keyword id="KW-0963">Cytoplasm</keyword>
<keyword id="KW-0227">DNA damage</keyword>
<keyword id="KW-0233">DNA recombination</keyword>
<keyword id="KW-0234">DNA repair</keyword>
<keyword id="KW-0238">DNA-binding</keyword>
<keyword id="KW-1185">Reference proteome</keyword>
<accession>Q8FPK4</accession>
<dbReference type="EMBL" id="BA000035">
    <property type="protein sequence ID" value="BAC18584.1"/>
    <property type="molecule type" value="Genomic_DNA"/>
</dbReference>
<dbReference type="RefSeq" id="WP_006767771.1">
    <property type="nucleotide sequence ID" value="NC_004369.1"/>
</dbReference>
<dbReference type="SMR" id="Q8FPK4"/>
<dbReference type="STRING" id="196164.gene:10742195"/>
<dbReference type="KEGG" id="cef:CE1774"/>
<dbReference type="eggNOG" id="COG0632">
    <property type="taxonomic scope" value="Bacteria"/>
</dbReference>
<dbReference type="HOGENOM" id="CLU_087936_2_1_11"/>
<dbReference type="OrthoDB" id="5293449at2"/>
<dbReference type="Proteomes" id="UP000001409">
    <property type="component" value="Chromosome"/>
</dbReference>
<dbReference type="GO" id="GO:0005737">
    <property type="term" value="C:cytoplasm"/>
    <property type="evidence" value="ECO:0007669"/>
    <property type="project" value="UniProtKB-SubCell"/>
</dbReference>
<dbReference type="GO" id="GO:0009379">
    <property type="term" value="C:Holliday junction helicase complex"/>
    <property type="evidence" value="ECO:0007669"/>
    <property type="project" value="InterPro"/>
</dbReference>
<dbReference type="GO" id="GO:0048476">
    <property type="term" value="C:Holliday junction resolvase complex"/>
    <property type="evidence" value="ECO:0007669"/>
    <property type="project" value="UniProtKB-UniRule"/>
</dbReference>
<dbReference type="GO" id="GO:0005524">
    <property type="term" value="F:ATP binding"/>
    <property type="evidence" value="ECO:0007669"/>
    <property type="project" value="InterPro"/>
</dbReference>
<dbReference type="GO" id="GO:0000400">
    <property type="term" value="F:four-way junction DNA binding"/>
    <property type="evidence" value="ECO:0007669"/>
    <property type="project" value="UniProtKB-UniRule"/>
</dbReference>
<dbReference type="GO" id="GO:0009378">
    <property type="term" value="F:four-way junction helicase activity"/>
    <property type="evidence" value="ECO:0007669"/>
    <property type="project" value="InterPro"/>
</dbReference>
<dbReference type="GO" id="GO:0006310">
    <property type="term" value="P:DNA recombination"/>
    <property type="evidence" value="ECO:0007669"/>
    <property type="project" value="UniProtKB-UniRule"/>
</dbReference>
<dbReference type="GO" id="GO:0006281">
    <property type="term" value="P:DNA repair"/>
    <property type="evidence" value="ECO:0007669"/>
    <property type="project" value="UniProtKB-UniRule"/>
</dbReference>
<dbReference type="CDD" id="cd14332">
    <property type="entry name" value="UBA_RuvA_C"/>
    <property type="match status" value="1"/>
</dbReference>
<dbReference type="FunFam" id="2.40.50.140:FF:000083">
    <property type="entry name" value="Holliday junction ATP-dependent DNA helicase RuvA"/>
    <property type="match status" value="1"/>
</dbReference>
<dbReference type="Gene3D" id="1.10.150.20">
    <property type="entry name" value="5' to 3' exonuclease, C-terminal subdomain"/>
    <property type="match status" value="1"/>
</dbReference>
<dbReference type="Gene3D" id="1.10.8.10">
    <property type="entry name" value="DNA helicase RuvA subunit, C-terminal domain"/>
    <property type="match status" value="1"/>
</dbReference>
<dbReference type="Gene3D" id="2.40.50.140">
    <property type="entry name" value="Nucleic acid-binding proteins"/>
    <property type="match status" value="1"/>
</dbReference>
<dbReference type="HAMAP" id="MF_00031">
    <property type="entry name" value="DNA_HJ_migration_RuvA"/>
    <property type="match status" value="1"/>
</dbReference>
<dbReference type="InterPro" id="IPR013849">
    <property type="entry name" value="DNA_helicase_Holl-junc_RuvA_I"/>
</dbReference>
<dbReference type="InterPro" id="IPR012340">
    <property type="entry name" value="NA-bd_OB-fold"/>
</dbReference>
<dbReference type="InterPro" id="IPR000085">
    <property type="entry name" value="RuvA"/>
</dbReference>
<dbReference type="InterPro" id="IPR010994">
    <property type="entry name" value="RuvA_2-like"/>
</dbReference>
<dbReference type="InterPro" id="IPR011114">
    <property type="entry name" value="RuvA_C"/>
</dbReference>
<dbReference type="InterPro" id="IPR036267">
    <property type="entry name" value="RuvA_C_sf"/>
</dbReference>
<dbReference type="NCBIfam" id="TIGR00084">
    <property type="entry name" value="ruvA"/>
    <property type="match status" value="1"/>
</dbReference>
<dbReference type="Pfam" id="PF14520">
    <property type="entry name" value="HHH_5"/>
    <property type="match status" value="1"/>
</dbReference>
<dbReference type="Pfam" id="PF07499">
    <property type="entry name" value="RuvA_C"/>
    <property type="match status" value="1"/>
</dbReference>
<dbReference type="Pfam" id="PF01330">
    <property type="entry name" value="RuvA_N"/>
    <property type="match status" value="1"/>
</dbReference>
<dbReference type="SUPFAM" id="SSF46929">
    <property type="entry name" value="DNA helicase RuvA subunit, C-terminal domain"/>
    <property type="match status" value="1"/>
</dbReference>
<dbReference type="SUPFAM" id="SSF50249">
    <property type="entry name" value="Nucleic acid-binding proteins"/>
    <property type="match status" value="1"/>
</dbReference>
<dbReference type="SUPFAM" id="SSF47781">
    <property type="entry name" value="RuvA domain 2-like"/>
    <property type="match status" value="1"/>
</dbReference>
<protein>
    <recommendedName>
        <fullName evidence="1">Holliday junction branch migration complex subunit RuvA</fullName>
    </recommendedName>
</protein>
<gene>
    <name evidence="1" type="primary">ruvA</name>
    <name type="ordered locus">CE1774</name>
</gene>
<organism>
    <name type="scientific">Corynebacterium efficiens (strain DSM 44549 / YS-314 / AJ 12310 / JCM 11189 / NBRC 100395)</name>
    <dbReference type="NCBI Taxonomy" id="196164"/>
    <lineage>
        <taxon>Bacteria</taxon>
        <taxon>Bacillati</taxon>
        <taxon>Actinomycetota</taxon>
        <taxon>Actinomycetes</taxon>
        <taxon>Mycobacteriales</taxon>
        <taxon>Corynebacteriaceae</taxon>
        <taxon>Corynebacterium</taxon>
    </lineage>
</organism>
<reference key="1">
    <citation type="journal article" date="2003" name="Genome Res.">
        <title>Comparative complete genome sequence analysis of the amino acid replacements responsible for the thermostability of Corynebacterium efficiens.</title>
        <authorList>
            <person name="Nishio Y."/>
            <person name="Nakamura Y."/>
            <person name="Kawarabayasi Y."/>
            <person name="Usuda Y."/>
            <person name="Kimura E."/>
            <person name="Sugimoto S."/>
            <person name="Matsui K."/>
            <person name="Yamagishi A."/>
            <person name="Kikuchi H."/>
            <person name="Ikeo K."/>
            <person name="Gojobori T."/>
        </authorList>
    </citation>
    <scope>NUCLEOTIDE SEQUENCE [LARGE SCALE GENOMIC DNA]</scope>
    <source>
        <strain>DSM 44549 / YS-314 / AJ 12310 / JCM 11189 / NBRC 100395</strain>
    </source>
</reference>
<proteinExistence type="inferred from homology"/>
<name>RUVA_COREF</name>
<feature type="chain" id="PRO_0000094625" description="Holliday junction branch migration complex subunit RuvA">
    <location>
        <begin position="1"/>
        <end position="204"/>
    </location>
</feature>
<feature type="region of interest" description="Domain I" evidence="1">
    <location>
        <begin position="1"/>
        <end position="63"/>
    </location>
</feature>
<feature type="region of interest" description="Domain II" evidence="1">
    <location>
        <begin position="64"/>
        <end position="142"/>
    </location>
</feature>
<feature type="region of interest" description="Flexible linker" evidence="1">
    <location>
        <begin position="143"/>
        <end position="151"/>
    </location>
</feature>
<feature type="region of interest" description="Domain III" evidence="1">
    <location>
        <begin position="152"/>
        <end position="204"/>
    </location>
</feature>